<proteinExistence type="inferred from homology"/>
<keyword id="KW-0004">4Fe-4S</keyword>
<keyword id="KW-0963">Cytoplasm</keyword>
<keyword id="KW-0408">Iron</keyword>
<keyword id="KW-0411">Iron-sulfur</keyword>
<keyword id="KW-0479">Metal-binding</keyword>
<keyword id="KW-1185">Reference proteome</keyword>
<keyword id="KW-0949">S-adenosyl-L-methionine</keyword>
<keyword id="KW-0808">Transferase</keyword>
<evidence type="ECO:0000255" key="1">
    <source>
        <dbReference type="HAMAP-Rule" id="MF_00206"/>
    </source>
</evidence>
<evidence type="ECO:0000255" key="2">
    <source>
        <dbReference type="PROSITE-ProRule" id="PRU01266"/>
    </source>
</evidence>
<evidence type="ECO:0000256" key="3">
    <source>
        <dbReference type="SAM" id="MobiDB-lite"/>
    </source>
</evidence>
<sequence>MSVTADGRRMLRIEAKNAETPIESKPRWIRTTAKVGPEYRDIKNRVKGAGLHTVCQEAGCPNINECWEDREATFLIGGDTCSRRCDFCQIKSGRPSPLDMDEPRRVAENVREMGLRYATITGVTRDDLDDEGAWLYAEVVKKIHELNPNTGVENLTPDFSNRPELLKVVFDSQPEVFAHNLETVPRIFKRIRPAFKYDRSLEVIQAAHDYGLVTKSNLILGMGEKKEEVRAAIKDLADAGTDILTITQYLRPSSMHHPIERWVKPEEFMEHSDAAYELGIKAVMSGPLVRSSYRAGRLYAQAKQARGEAIPENLKHLEETLDSTTSQEASTLLERYGASEDTPVTASRR</sequence>
<dbReference type="EC" id="2.8.1.8" evidence="1"/>
<dbReference type="EMBL" id="CR931997">
    <property type="protein sequence ID" value="CAI36867.1"/>
    <property type="molecule type" value="Genomic_DNA"/>
</dbReference>
<dbReference type="RefSeq" id="WP_011273327.1">
    <property type="nucleotide sequence ID" value="NC_007164.1"/>
</dbReference>
<dbReference type="SMR" id="Q4JWE0"/>
<dbReference type="STRING" id="306537.jk0705"/>
<dbReference type="GeneID" id="92738228"/>
<dbReference type="KEGG" id="cjk:jk0705"/>
<dbReference type="PATRIC" id="fig|306537.10.peg.714"/>
<dbReference type="eggNOG" id="COG0320">
    <property type="taxonomic scope" value="Bacteria"/>
</dbReference>
<dbReference type="HOGENOM" id="CLU_033144_2_1_11"/>
<dbReference type="OrthoDB" id="9787898at2"/>
<dbReference type="UniPathway" id="UPA00538">
    <property type="reaction ID" value="UER00593"/>
</dbReference>
<dbReference type="Proteomes" id="UP000000545">
    <property type="component" value="Chromosome"/>
</dbReference>
<dbReference type="GO" id="GO:0005737">
    <property type="term" value="C:cytoplasm"/>
    <property type="evidence" value="ECO:0007669"/>
    <property type="project" value="UniProtKB-SubCell"/>
</dbReference>
<dbReference type="GO" id="GO:0051539">
    <property type="term" value="F:4 iron, 4 sulfur cluster binding"/>
    <property type="evidence" value="ECO:0007669"/>
    <property type="project" value="UniProtKB-UniRule"/>
</dbReference>
<dbReference type="GO" id="GO:0016992">
    <property type="term" value="F:lipoate synthase activity"/>
    <property type="evidence" value="ECO:0007669"/>
    <property type="project" value="UniProtKB-UniRule"/>
</dbReference>
<dbReference type="GO" id="GO:0046872">
    <property type="term" value="F:metal ion binding"/>
    <property type="evidence" value="ECO:0007669"/>
    <property type="project" value="UniProtKB-KW"/>
</dbReference>
<dbReference type="CDD" id="cd01335">
    <property type="entry name" value="Radical_SAM"/>
    <property type="match status" value="1"/>
</dbReference>
<dbReference type="Gene3D" id="3.20.20.70">
    <property type="entry name" value="Aldolase class I"/>
    <property type="match status" value="1"/>
</dbReference>
<dbReference type="HAMAP" id="MF_00206">
    <property type="entry name" value="Lipoyl_synth"/>
    <property type="match status" value="1"/>
</dbReference>
<dbReference type="InterPro" id="IPR013785">
    <property type="entry name" value="Aldolase_TIM"/>
</dbReference>
<dbReference type="InterPro" id="IPR006638">
    <property type="entry name" value="Elp3/MiaA/NifB-like_rSAM"/>
</dbReference>
<dbReference type="InterPro" id="IPR031691">
    <property type="entry name" value="LIAS_N"/>
</dbReference>
<dbReference type="InterPro" id="IPR003698">
    <property type="entry name" value="Lipoyl_synth"/>
</dbReference>
<dbReference type="InterPro" id="IPR007197">
    <property type="entry name" value="rSAM"/>
</dbReference>
<dbReference type="NCBIfam" id="TIGR00510">
    <property type="entry name" value="lipA"/>
    <property type="match status" value="1"/>
</dbReference>
<dbReference type="NCBIfam" id="NF004019">
    <property type="entry name" value="PRK05481.1"/>
    <property type="match status" value="1"/>
</dbReference>
<dbReference type="NCBIfam" id="NF009544">
    <property type="entry name" value="PRK12928.1"/>
    <property type="match status" value="1"/>
</dbReference>
<dbReference type="PANTHER" id="PTHR10949">
    <property type="entry name" value="LIPOYL SYNTHASE"/>
    <property type="match status" value="1"/>
</dbReference>
<dbReference type="PANTHER" id="PTHR10949:SF0">
    <property type="entry name" value="LIPOYL SYNTHASE, MITOCHONDRIAL"/>
    <property type="match status" value="1"/>
</dbReference>
<dbReference type="Pfam" id="PF16881">
    <property type="entry name" value="LIAS_N"/>
    <property type="match status" value="1"/>
</dbReference>
<dbReference type="Pfam" id="PF04055">
    <property type="entry name" value="Radical_SAM"/>
    <property type="match status" value="1"/>
</dbReference>
<dbReference type="PIRSF" id="PIRSF005963">
    <property type="entry name" value="Lipoyl_synth"/>
    <property type="match status" value="1"/>
</dbReference>
<dbReference type="SFLD" id="SFLDF00271">
    <property type="entry name" value="lipoyl_synthase"/>
    <property type="match status" value="1"/>
</dbReference>
<dbReference type="SFLD" id="SFLDG01058">
    <property type="entry name" value="lipoyl_synthase_like"/>
    <property type="match status" value="1"/>
</dbReference>
<dbReference type="SMART" id="SM00729">
    <property type="entry name" value="Elp3"/>
    <property type="match status" value="1"/>
</dbReference>
<dbReference type="SUPFAM" id="SSF102114">
    <property type="entry name" value="Radical SAM enzymes"/>
    <property type="match status" value="1"/>
</dbReference>
<dbReference type="PROSITE" id="PS51918">
    <property type="entry name" value="RADICAL_SAM"/>
    <property type="match status" value="1"/>
</dbReference>
<organism>
    <name type="scientific">Corynebacterium jeikeium (strain K411)</name>
    <dbReference type="NCBI Taxonomy" id="306537"/>
    <lineage>
        <taxon>Bacteria</taxon>
        <taxon>Bacillati</taxon>
        <taxon>Actinomycetota</taxon>
        <taxon>Actinomycetes</taxon>
        <taxon>Mycobacteriales</taxon>
        <taxon>Corynebacteriaceae</taxon>
        <taxon>Corynebacterium</taxon>
    </lineage>
</organism>
<reference key="1">
    <citation type="journal article" date="2005" name="J. Bacteriol.">
        <title>Complete genome sequence and analysis of the multiresistant nosocomial pathogen Corynebacterium jeikeium K411, a lipid-requiring bacterium of the human skin flora.</title>
        <authorList>
            <person name="Tauch A."/>
            <person name="Kaiser O."/>
            <person name="Hain T."/>
            <person name="Goesmann A."/>
            <person name="Weisshaar B."/>
            <person name="Albersmeier A."/>
            <person name="Bekel T."/>
            <person name="Bischoff N."/>
            <person name="Brune I."/>
            <person name="Chakraborty T."/>
            <person name="Kalinowski J."/>
            <person name="Meyer F."/>
            <person name="Rupp O."/>
            <person name="Schneiker S."/>
            <person name="Viehoever P."/>
            <person name="Puehler A."/>
        </authorList>
    </citation>
    <scope>NUCLEOTIDE SEQUENCE [LARGE SCALE GENOMIC DNA]</scope>
    <source>
        <strain>K411</strain>
    </source>
</reference>
<accession>Q4JWE0</accession>
<name>LIPA_CORJK</name>
<gene>
    <name evidence="1" type="primary">lipA</name>
    <name type="ordered locus">jk0705</name>
</gene>
<protein>
    <recommendedName>
        <fullName evidence="1">Lipoyl synthase</fullName>
        <ecNumber evidence="1">2.8.1.8</ecNumber>
    </recommendedName>
    <alternativeName>
        <fullName evidence="1">Lip-syn</fullName>
        <shortName evidence="1">LS</shortName>
    </alternativeName>
    <alternativeName>
        <fullName evidence="1">Lipoate synthase</fullName>
    </alternativeName>
    <alternativeName>
        <fullName evidence="1">Lipoic acid synthase</fullName>
    </alternativeName>
    <alternativeName>
        <fullName evidence="1">Sulfur insertion protein LipA</fullName>
    </alternativeName>
</protein>
<feature type="chain" id="PRO_1000012212" description="Lipoyl synthase">
    <location>
        <begin position="1"/>
        <end position="349"/>
    </location>
</feature>
<feature type="domain" description="Radical SAM core" evidence="2">
    <location>
        <begin position="67"/>
        <end position="281"/>
    </location>
</feature>
<feature type="region of interest" description="Disordered" evidence="3">
    <location>
        <begin position="321"/>
        <end position="349"/>
    </location>
</feature>
<feature type="binding site" evidence="1">
    <location>
        <position position="55"/>
    </location>
    <ligand>
        <name>[4Fe-4S] cluster</name>
        <dbReference type="ChEBI" id="CHEBI:49883"/>
        <label>1</label>
    </ligand>
</feature>
<feature type="binding site" evidence="1">
    <location>
        <position position="60"/>
    </location>
    <ligand>
        <name>[4Fe-4S] cluster</name>
        <dbReference type="ChEBI" id="CHEBI:49883"/>
        <label>1</label>
    </ligand>
</feature>
<feature type="binding site" evidence="1">
    <location>
        <position position="66"/>
    </location>
    <ligand>
        <name>[4Fe-4S] cluster</name>
        <dbReference type="ChEBI" id="CHEBI:49883"/>
        <label>1</label>
    </ligand>
</feature>
<feature type="binding site" evidence="1">
    <location>
        <position position="81"/>
    </location>
    <ligand>
        <name>[4Fe-4S] cluster</name>
        <dbReference type="ChEBI" id="CHEBI:49883"/>
        <label>2</label>
        <note>4Fe-4S-S-AdoMet</note>
    </ligand>
</feature>
<feature type="binding site" evidence="1">
    <location>
        <position position="85"/>
    </location>
    <ligand>
        <name>[4Fe-4S] cluster</name>
        <dbReference type="ChEBI" id="CHEBI:49883"/>
        <label>2</label>
        <note>4Fe-4S-S-AdoMet</note>
    </ligand>
</feature>
<feature type="binding site" evidence="1">
    <location>
        <position position="88"/>
    </location>
    <ligand>
        <name>[4Fe-4S] cluster</name>
        <dbReference type="ChEBI" id="CHEBI:49883"/>
        <label>2</label>
        <note>4Fe-4S-S-AdoMet</note>
    </ligand>
</feature>
<feature type="binding site" evidence="1">
    <location>
        <position position="292"/>
    </location>
    <ligand>
        <name>[4Fe-4S] cluster</name>
        <dbReference type="ChEBI" id="CHEBI:49883"/>
        <label>1</label>
    </ligand>
</feature>
<comment type="function">
    <text evidence="1">Catalyzes the radical-mediated insertion of two sulfur atoms into the C-6 and C-8 positions of the octanoyl moiety bound to the lipoyl domains of lipoate-dependent enzymes, thereby converting the octanoylated domains into lipoylated derivatives.</text>
</comment>
<comment type="catalytic activity">
    <reaction evidence="1">
        <text>[[Fe-S] cluster scaffold protein carrying a second [4Fe-4S](2+) cluster] + N(6)-octanoyl-L-lysyl-[protein] + 2 oxidized [2Fe-2S]-[ferredoxin] + 2 S-adenosyl-L-methionine + 4 H(+) = [[Fe-S] cluster scaffold protein] + N(6)-[(R)-dihydrolipoyl]-L-lysyl-[protein] + 4 Fe(3+) + 2 hydrogen sulfide + 2 5'-deoxyadenosine + 2 L-methionine + 2 reduced [2Fe-2S]-[ferredoxin]</text>
        <dbReference type="Rhea" id="RHEA:16585"/>
        <dbReference type="Rhea" id="RHEA-COMP:9928"/>
        <dbReference type="Rhea" id="RHEA-COMP:10000"/>
        <dbReference type="Rhea" id="RHEA-COMP:10001"/>
        <dbReference type="Rhea" id="RHEA-COMP:10475"/>
        <dbReference type="Rhea" id="RHEA-COMP:14568"/>
        <dbReference type="Rhea" id="RHEA-COMP:14569"/>
        <dbReference type="ChEBI" id="CHEBI:15378"/>
        <dbReference type="ChEBI" id="CHEBI:17319"/>
        <dbReference type="ChEBI" id="CHEBI:29034"/>
        <dbReference type="ChEBI" id="CHEBI:29919"/>
        <dbReference type="ChEBI" id="CHEBI:33722"/>
        <dbReference type="ChEBI" id="CHEBI:33737"/>
        <dbReference type="ChEBI" id="CHEBI:33738"/>
        <dbReference type="ChEBI" id="CHEBI:57844"/>
        <dbReference type="ChEBI" id="CHEBI:59789"/>
        <dbReference type="ChEBI" id="CHEBI:78809"/>
        <dbReference type="ChEBI" id="CHEBI:83100"/>
        <dbReference type="EC" id="2.8.1.8"/>
    </reaction>
</comment>
<comment type="cofactor">
    <cofactor evidence="1">
        <name>[4Fe-4S] cluster</name>
        <dbReference type="ChEBI" id="CHEBI:49883"/>
    </cofactor>
    <text evidence="1">Binds 2 [4Fe-4S] clusters per subunit. One cluster is coordinated with 3 cysteines and an exchangeable S-adenosyl-L-methionine.</text>
</comment>
<comment type="pathway">
    <text evidence="1">Protein modification; protein lipoylation via endogenous pathway; protein N(6)-(lipoyl)lysine from octanoyl-[acyl-carrier-protein]: step 2/2.</text>
</comment>
<comment type="subcellular location">
    <subcellularLocation>
        <location evidence="1">Cytoplasm</location>
    </subcellularLocation>
</comment>
<comment type="similarity">
    <text evidence="1">Belongs to the radical SAM superfamily. Lipoyl synthase family.</text>
</comment>